<name>SEC13_PHANO</name>
<keyword id="KW-0968">Cytoplasmic vesicle</keyword>
<keyword id="KW-0256">Endoplasmic reticulum</keyword>
<keyword id="KW-0931">ER-Golgi transport</keyword>
<keyword id="KW-0472">Membrane</keyword>
<keyword id="KW-0509">mRNA transport</keyword>
<keyword id="KW-0906">Nuclear pore complex</keyword>
<keyword id="KW-0539">Nucleus</keyword>
<keyword id="KW-0653">Protein transport</keyword>
<keyword id="KW-0677">Repeat</keyword>
<keyword id="KW-0811">Translocation</keyword>
<keyword id="KW-0813">Transport</keyword>
<keyword id="KW-0853">WD repeat</keyword>
<feature type="chain" id="PRO_0000295420" description="Protein transport protein SEC13">
    <location>
        <begin position="1"/>
        <end position="302"/>
    </location>
</feature>
<feature type="repeat" description="WD 1">
    <location>
        <begin position="14"/>
        <end position="53"/>
    </location>
</feature>
<feature type="repeat" description="WD 2">
    <location>
        <begin position="58"/>
        <end position="99"/>
    </location>
</feature>
<feature type="repeat" description="WD 3">
    <location>
        <begin position="104"/>
        <end position="145"/>
    </location>
</feature>
<feature type="repeat" description="WD 4">
    <location>
        <begin position="149"/>
        <end position="204"/>
    </location>
</feature>
<feature type="repeat" description="WD 5">
    <location>
        <begin position="211"/>
        <end position="253"/>
    </location>
</feature>
<feature type="repeat" description="WD 6">
    <location>
        <begin position="257"/>
        <end position="296"/>
    </location>
</feature>
<gene>
    <name type="primary">SEC13</name>
    <name type="ORF">SNOG_06755</name>
</gene>
<dbReference type="EMBL" id="CH445334">
    <property type="protein sequence ID" value="EAT85406.1"/>
    <property type="molecule type" value="Genomic_DNA"/>
</dbReference>
<dbReference type="RefSeq" id="XP_001797118.1">
    <property type="nucleotide sequence ID" value="XM_001797066.1"/>
</dbReference>
<dbReference type="SMR" id="Q0UNA9"/>
<dbReference type="FunCoup" id="Q0UNA9">
    <property type="interactions" value="988"/>
</dbReference>
<dbReference type="STRING" id="321614.Q0UNA9"/>
<dbReference type="EnsemblFungi" id="SNOT_06755">
    <property type="protein sequence ID" value="SNOT_06755"/>
    <property type="gene ID" value="SNOG_06755"/>
</dbReference>
<dbReference type="GeneID" id="5974008"/>
<dbReference type="KEGG" id="pno:SNOG_06755"/>
<dbReference type="VEuPathDB" id="FungiDB:JI435_067550"/>
<dbReference type="eggNOG" id="KOG1332">
    <property type="taxonomic scope" value="Eukaryota"/>
</dbReference>
<dbReference type="HOGENOM" id="CLU_032441_0_1_1"/>
<dbReference type="InParanoid" id="Q0UNA9"/>
<dbReference type="OMA" id="IWKEEGD"/>
<dbReference type="Proteomes" id="UP000001055">
    <property type="component" value="Unassembled WGS sequence"/>
</dbReference>
<dbReference type="GO" id="GO:0030127">
    <property type="term" value="C:COPII vesicle coat"/>
    <property type="evidence" value="ECO:0000318"/>
    <property type="project" value="GO_Central"/>
</dbReference>
<dbReference type="GO" id="GO:0005789">
    <property type="term" value="C:endoplasmic reticulum membrane"/>
    <property type="evidence" value="ECO:0007669"/>
    <property type="project" value="UniProtKB-SubCell"/>
</dbReference>
<dbReference type="GO" id="GO:0061700">
    <property type="term" value="C:GATOR2 complex"/>
    <property type="evidence" value="ECO:0007669"/>
    <property type="project" value="EnsemblFungi"/>
</dbReference>
<dbReference type="GO" id="GO:0031080">
    <property type="term" value="C:nuclear pore outer ring"/>
    <property type="evidence" value="ECO:0000318"/>
    <property type="project" value="GO_Central"/>
</dbReference>
<dbReference type="GO" id="GO:0005198">
    <property type="term" value="F:structural molecule activity"/>
    <property type="evidence" value="ECO:0000318"/>
    <property type="project" value="GO_Central"/>
</dbReference>
<dbReference type="GO" id="GO:0090114">
    <property type="term" value="P:COPII-coated vesicle budding"/>
    <property type="evidence" value="ECO:0000318"/>
    <property type="project" value="GO_Central"/>
</dbReference>
<dbReference type="GO" id="GO:0036503">
    <property type="term" value="P:ERAD pathway"/>
    <property type="evidence" value="ECO:0007669"/>
    <property type="project" value="EnsemblFungi"/>
</dbReference>
<dbReference type="GO" id="GO:0051028">
    <property type="term" value="P:mRNA transport"/>
    <property type="evidence" value="ECO:0007669"/>
    <property type="project" value="UniProtKB-KW"/>
</dbReference>
<dbReference type="GO" id="GO:0051664">
    <property type="term" value="P:nuclear pore localization"/>
    <property type="evidence" value="ECO:0007669"/>
    <property type="project" value="EnsemblFungi"/>
</dbReference>
<dbReference type="GO" id="GO:0045893">
    <property type="term" value="P:positive regulation of DNA-templated transcription"/>
    <property type="evidence" value="ECO:0007669"/>
    <property type="project" value="EnsemblFungi"/>
</dbReference>
<dbReference type="GO" id="GO:1902953">
    <property type="term" value="P:positive regulation of ER to Golgi vesicle-mediated transport"/>
    <property type="evidence" value="ECO:0007669"/>
    <property type="project" value="EnsemblFungi"/>
</dbReference>
<dbReference type="GO" id="GO:0070863">
    <property type="term" value="P:positive regulation of protein exit from endoplasmic reticulum"/>
    <property type="evidence" value="ECO:0007669"/>
    <property type="project" value="EnsemblFungi"/>
</dbReference>
<dbReference type="GO" id="GO:0032008">
    <property type="term" value="P:positive regulation of TOR signaling"/>
    <property type="evidence" value="ECO:0000318"/>
    <property type="project" value="GO_Central"/>
</dbReference>
<dbReference type="GO" id="GO:1904263">
    <property type="term" value="P:positive regulation of TORC1 signaling"/>
    <property type="evidence" value="ECO:0007669"/>
    <property type="project" value="EnsemblFungi"/>
</dbReference>
<dbReference type="GO" id="GO:0032527">
    <property type="term" value="P:protein exit from endoplasmic reticulum"/>
    <property type="evidence" value="ECO:0000318"/>
    <property type="project" value="GO_Central"/>
</dbReference>
<dbReference type="GO" id="GO:0006606">
    <property type="term" value="P:protein import into nucleus"/>
    <property type="evidence" value="ECO:0000318"/>
    <property type="project" value="GO_Central"/>
</dbReference>
<dbReference type="FunFam" id="2.130.10.10:FF:000017">
    <property type="entry name" value="SEC13 homolog (S. cerevisiae)"/>
    <property type="match status" value="1"/>
</dbReference>
<dbReference type="Gene3D" id="2.130.10.10">
    <property type="entry name" value="YVTN repeat-like/Quinoprotein amine dehydrogenase"/>
    <property type="match status" value="1"/>
</dbReference>
<dbReference type="InterPro" id="IPR020472">
    <property type="entry name" value="G-protein_beta_WD-40_rep"/>
</dbReference>
<dbReference type="InterPro" id="IPR037363">
    <property type="entry name" value="Sec13/Seh1_fam"/>
</dbReference>
<dbReference type="InterPro" id="IPR015943">
    <property type="entry name" value="WD40/YVTN_repeat-like_dom_sf"/>
</dbReference>
<dbReference type="InterPro" id="IPR036322">
    <property type="entry name" value="WD40_repeat_dom_sf"/>
</dbReference>
<dbReference type="InterPro" id="IPR001680">
    <property type="entry name" value="WD40_rpt"/>
</dbReference>
<dbReference type="PANTHER" id="PTHR11024">
    <property type="entry name" value="NUCLEAR PORE COMPLEX PROTEIN SEC13 / SEH1 FAMILY MEMBER"/>
    <property type="match status" value="1"/>
</dbReference>
<dbReference type="PANTHER" id="PTHR11024:SF2">
    <property type="entry name" value="PROTEIN SEC13 HOMOLOG"/>
    <property type="match status" value="1"/>
</dbReference>
<dbReference type="Pfam" id="PF00400">
    <property type="entry name" value="WD40"/>
    <property type="match status" value="4"/>
</dbReference>
<dbReference type="PRINTS" id="PR00320">
    <property type="entry name" value="GPROTEINBRPT"/>
</dbReference>
<dbReference type="SMART" id="SM00320">
    <property type="entry name" value="WD40"/>
    <property type="match status" value="6"/>
</dbReference>
<dbReference type="SUPFAM" id="SSF50978">
    <property type="entry name" value="WD40 repeat-like"/>
    <property type="match status" value="1"/>
</dbReference>
<dbReference type="PROSITE" id="PS50082">
    <property type="entry name" value="WD_REPEATS_2"/>
    <property type="match status" value="2"/>
</dbReference>
<dbReference type="PROSITE" id="PS50294">
    <property type="entry name" value="WD_REPEATS_REGION"/>
    <property type="match status" value="1"/>
</dbReference>
<accession>Q0UNA9</accession>
<organism>
    <name type="scientific">Phaeosphaeria nodorum (strain SN15 / ATCC MYA-4574 / FGSC 10173)</name>
    <name type="common">Glume blotch fungus</name>
    <name type="synonym">Parastagonospora nodorum</name>
    <dbReference type="NCBI Taxonomy" id="321614"/>
    <lineage>
        <taxon>Eukaryota</taxon>
        <taxon>Fungi</taxon>
        <taxon>Dikarya</taxon>
        <taxon>Ascomycota</taxon>
        <taxon>Pezizomycotina</taxon>
        <taxon>Dothideomycetes</taxon>
        <taxon>Pleosporomycetidae</taxon>
        <taxon>Pleosporales</taxon>
        <taxon>Pleosporineae</taxon>
        <taxon>Phaeosphaeriaceae</taxon>
        <taxon>Parastagonospora</taxon>
    </lineage>
</organism>
<comment type="function">
    <text evidence="2">Component of the coat protein complex II (COPII) which promotes the formation of transport vesicles from the endoplasmic reticulum (ER). The coat has two main functions, the physical deformation of the endoplasmic reticulum membrane into vesicles and the selection of cargo molecules. It also functions as a component of the nuclear pore complex (NPC). NPC components, collectively referred to as nucleoporins (NUPs), can play the role of both NPC structural components and of docking or interaction partners for transiently associated nuclear transport factors. SEC13 is required for efficient mRNA export from the nucleus to the cytoplasm and for correct nuclear pore biogenesis and distribution (By similarity).</text>
</comment>
<comment type="subunit">
    <text evidence="2">The COPII coat is composed of at least 5 proteins: the SEC23/24 complex, the SEC13/31 complex, and the protein SAR1. Component of the nuclear pore complex (NPC). NPC constitutes the exclusive means of nucleocytoplasmic transport. NPCs allow the passive diffusion of ions and small molecules and the active, nuclear transport receptor-mediated bidirectional transport of macromolecules such as proteins, RNAs, ribonucleoparticles (RNPs), and ribosomal subunits across the nuclear envelope. Due to its 8-fold rotational symmetry, all subunits are present with 8 copies or multiples thereof.</text>
</comment>
<comment type="subcellular location">
    <subcellularLocation>
        <location evidence="1">Cytoplasmic vesicle</location>
        <location evidence="1">COPII-coated vesicle membrane</location>
        <topology evidence="1">Peripheral membrane protein</topology>
        <orientation evidence="1">Cytoplasmic side</orientation>
    </subcellularLocation>
    <subcellularLocation>
        <location evidence="1">Endoplasmic reticulum membrane</location>
        <topology evidence="1">Peripheral membrane protein</topology>
        <orientation evidence="1">Cytoplasmic side</orientation>
    </subcellularLocation>
    <subcellularLocation>
        <location evidence="2">Nucleus</location>
        <location evidence="2">Nuclear pore complex</location>
    </subcellularLocation>
</comment>
<comment type="similarity">
    <text evidence="3">Belongs to the WD repeat SEC13 family.</text>
</comment>
<evidence type="ECO:0000250" key="1"/>
<evidence type="ECO:0000250" key="2">
    <source>
        <dbReference type="UniProtKB" id="Q04491"/>
    </source>
</evidence>
<evidence type="ECO:0000305" key="3"/>
<reference key="1">
    <citation type="journal article" date="2007" name="Plant Cell">
        <title>Dothideomycete-plant interactions illuminated by genome sequencing and EST analysis of the wheat pathogen Stagonospora nodorum.</title>
        <authorList>
            <person name="Hane J.K."/>
            <person name="Lowe R.G.T."/>
            <person name="Solomon P.S."/>
            <person name="Tan K.-C."/>
            <person name="Schoch C.L."/>
            <person name="Spatafora J.W."/>
            <person name="Crous P.W."/>
            <person name="Kodira C.D."/>
            <person name="Birren B.W."/>
            <person name="Galagan J.E."/>
            <person name="Torriani S.F.F."/>
            <person name="McDonald B.A."/>
            <person name="Oliver R.P."/>
        </authorList>
    </citation>
    <scope>NUCLEOTIDE SEQUENCE [LARGE SCALE GENOMIC DNA]</scope>
    <source>
        <strain>SN15 / ATCC MYA-4574 / FGSC 10173</strain>
    </source>
</reference>
<sequence>MADNGQNVDLLSIEANEVQHDAVLDYYGRRLATCSSDKTIKIFEVEGDKHTLVETLRGHEGPVWCVAWAHPKYGNILASSSYDGKVIIWREQSSTWQKIYEVALHTASVNIVAWAPHEVGCLLACASSDGNVSVLEFKDNAWSHVIFQACGSGVNSVSWAPAVAPGQVVSASGNQAGAARRFVTGGSDCQVKLWDFSAETGSWQSTQILTGHTDWVRDVAWSPTVLSKSYIASASQDKTVRIWTSSDLRDWKSTVLNVDAVAWRVSWSLSGNVLAVSTGDNRVSLWKERLSGGWECVKTIEE</sequence>
<proteinExistence type="inferred from homology"/>
<protein>
    <recommendedName>
        <fullName>Protein transport protein SEC13</fullName>
    </recommendedName>
</protein>